<comment type="function">
    <text>Essential for the control of the cell cycle at the G2/M (mitosis) transition.</text>
</comment>
<comment type="subunit">
    <text>Interacts with the CDK1 protein kinase to form a serine/threonine kinase holoenzyme complex also known as maturation promoting factor (MPF). The cyclin subunit imparts substrate specificity to the complex.</text>
</comment>
<comment type="developmental stage">
    <text>Accumulates steadily during G2 and is abruptly destroyed at mitosis.</text>
</comment>
<comment type="similarity">
    <text evidence="1">Belongs to the cyclin family. Cyclin AB subfamily.</text>
</comment>
<sequence length="409" mass="46086">MALGTRNMNMNLHGESKHTFNNENVSARLGGKSIAVQKPAQRAALGNISNVVRTAQAGSKKVVKKDTRQKAMTKTKATSSLHAVVGLPVEDLPTEMRSTSPDVLDAMEVDQAIEAFSQQLIALQVEDIDKDDGDNPQLCSEYAKDIYLYLRRLEVEMMVPANYLDRQETQITGRMRLILVDWLVQVHLRFHLLQETLFLTVQLIDRFLAEHSVSKGKLQLVGVTAMFIASKYEEMYPPEINDFVYITDNAYTKAQIRQMEIAMLKGLKYKLGKPLCLHFLRRNSKAAGVDAQKHTLAKYLMEITLPEYSMVQYSPSEIAAAAIYLSMTLLDPETHSSWCPKMTHYSMYSEDHLRPIVQKIVQILLRDDSASQKYSAVKTKYGSSKFMKISGIAQLDSSLLKQIAQGSNE</sequence>
<dbReference type="EMBL" id="Y00608">
    <property type="protein sequence ID" value="CAA68650.1"/>
    <property type="molecule type" value="mRNA"/>
</dbReference>
<dbReference type="PIR" id="S00662">
    <property type="entry name" value="S00662"/>
</dbReference>
<dbReference type="PDB" id="6EF0">
    <property type="method" value="EM"/>
    <property type="resolution" value="4.43 A"/>
    <property type="chains" value="s=26-37"/>
</dbReference>
<dbReference type="PDB" id="6EF1">
    <property type="method" value="EM"/>
    <property type="resolution" value="4.73 A"/>
    <property type="chains" value="s=22-36"/>
</dbReference>
<dbReference type="PDB" id="6EF2">
    <property type="method" value="EM"/>
    <property type="resolution" value="4.27 A"/>
    <property type="chains" value="s=21-36"/>
</dbReference>
<dbReference type="PDB" id="6EF3">
    <property type="method" value="EM"/>
    <property type="resolution" value="4.17 A"/>
    <property type="chains" value="s=16-41"/>
</dbReference>
<dbReference type="PDBsum" id="6EF0"/>
<dbReference type="PDBsum" id="6EF1"/>
<dbReference type="PDBsum" id="6EF2"/>
<dbReference type="PDBsum" id="6EF3"/>
<dbReference type="SMR" id="P07818"/>
<dbReference type="ELM" id="P07818"/>
<dbReference type="GO" id="GO:0016538">
    <property type="term" value="F:cyclin-dependent protein serine/threonine kinase regulator activity"/>
    <property type="evidence" value="ECO:0007669"/>
    <property type="project" value="InterPro"/>
</dbReference>
<dbReference type="GO" id="GO:0051301">
    <property type="term" value="P:cell division"/>
    <property type="evidence" value="ECO:0007669"/>
    <property type="project" value="UniProtKB-KW"/>
</dbReference>
<dbReference type="GO" id="GO:0044772">
    <property type="term" value="P:mitotic cell cycle phase transition"/>
    <property type="evidence" value="ECO:0007669"/>
    <property type="project" value="InterPro"/>
</dbReference>
<dbReference type="CDD" id="cd20507">
    <property type="entry name" value="CYCLIN_CCNB1-like_rpt1"/>
    <property type="match status" value="1"/>
</dbReference>
<dbReference type="CDD" id="cd20509">
    <property type="entry name" value="CYCLIN_CCNB1-like_rpt2"/>
    <property type="match status" value="1"/>
</dbReference>
<dbReference type="FunFam" id="1.10.472.10:FF:000198">
    <property type="entry name" value="G2/mitotic-specific cyclin-B1"/>
    <property type="match status" value="1"/>
</dbReference>
<dbReference type="Gene3D" id="1.10.472.10">
    <property type="entry name" value="Cyclin-like"/>
    <property type="match status" value="2"/>
</dbReference>
<dbReference type="InterPro" id="IPR039361">
    <property type="entry name" value="Cyclin"/>
</dbReference>
<dbReference type="InterPro" id="IPR013763">
    <property type="entry name" value="Cyclin-like_dom"/>
</dbReference>
<dbReference type="InterPro" id="IPR036915">
    <property type="entry name" value="Cyclin-like_sf"/>
</dbReference>
<dbReference type="InterPro" id="IPR046965">
    <property type="entry name" value="Cyclin_A/B-like"/>
</dbReference>
<dbReference type="InterPro" id="IPR004367">
    <property type="entry name" value="Cyclin_C-dom"/>
</dbReference>
<dbReference type="InterPro" id="IPR006671">
    <property type="entry name" value="Cyclin_N"/>
</dbReference>
<dbReference type="InterPro" id="IPR048258">
    <property type="entry name" value="Cyclins_cyclin-box"/>
</dbReference>
<dbReference type="PANTHER" id="PTHR10177">
    <property type="entry name" value="CYCLINS"/>
    <property type="match status" value="1"/>
</dbReference>
<dbReference type="Pfam" id="PF02984">
    <property type="entry name" value="Cyclin_C"/>
    <property type="match status" value="1"/>
</dbReference>
<dbReference type="Pfam" id="PF00134">
    <property type="entry name" value="Cyclin_N"/>
    <property type="match status" value="1"/>
</dbReference>
<dbReference type="PIRSF" id="PIRSF001771">
    <property type="entry name" value="Cyclin_A_B_D_E"/>
    <property type="match status" value="1"/>
</dbReference>
<dbReference type="SMART" id="SM00385">
    <property type="entry name" value="CYCLIN"/>
    <property type="match status" value="2"/>
</dbReference>
<dbReference type="SMART" id="SM01332">
    <property type="entry name" value="Cyclin_C"/>
    <property type="match status" value="1"/>
</dbReference>
<dbReference type="SUPFAM" id="SSF47954">
    <property type="entry name" value="Cyclin-like"/>
    <property type="match status" value="2"/>
</dbReference>
<dbReference type="PROSITE" id="PS00292">
    <property type="entry name" value="CYCLINS"/>
    <property type="match status" value="1"/>
</dbReference>
<keyword id="KW-0002">3D-structure</keyword>
<keyword id="KW-0131">Cell cycle</keyword>
<keyword id="KW-0132">Cell division</keyword>
<keyword id="KW-0195">Cyclin</keyword>
<keyword id="KW-0498">Mitosis</keyword>
<reference key="1">
    <citation type="journal article" date="1987" name="EMBO J.">
        <title>Molecular cloning and characterization of the mRNA for cyclin from sea urchin eggs.</title>
        <authorList>
            <person name="Pines J."/>
            <person name="Hunt T."/>
        </authorList>
    </citation>
    <scope>NUCLEOTIDE SEQUENCE [MRNA]</scope>
</reference>
<feature type="chain" id="PRO_0000080377" description="G2/mitotic-specific cyclin-B">
    <location>
        <begin position="1"/>
        <end position="409"/>
    </location>
</feature>
<name>CCNB_ARBPU</name>
<organism>
    <name type="scientific">Arbacia punctulata</name>
    <name type="common">Punctuate sea urchin</name>
    <dbReference type="NCBI Taxonomy" id="7641"/>
    <lineage>
        <taxon>Eukaryota</taxon>
        <taxon>Metazoa</taxon>
        <taxon>Echinodermata</taxon>
        <taxon>Eleutherozoa</taxon>
        <taxon>Echinozoa</taxon>
        <taxon>Echinoidea</taxon>
        <taxon>Euechinoidea</taxon>
        <taxon>Echinacea</taxon>
        <taxon>Arbacioida</taxon>
        <taxon>Arbaciidae</taxon>
        <taxon>Arbacia</taxon>
    </lineage>
</organism>
<protein>
    <recommendedName>
        <fullName>G2/mitotic-specific cyclin-B</fullName>
    </recommendedName>
</protein>
<evidence type="ECO:0000305" key="1"/>
<accession>P07818</accession>
<proteinExistence type="evidence at protein level"/>